<gene>
    <name evidence="1" type="primary">ef1b</name>
    <name type="ordered locus">Smar_0716</name>
</gene>
<sequence>MAKVLVLLKVLPEDINIDLEELKEKIRKALPEGYEIKGYDIEPIAFGLKALRLYIFMPEETEGGTEPLENTVMNVEGVSQVEVEAVHRIT</sequence>
<dbReference type="EMBL" id="CP000575">
    <property type="protein sequence ID" value="ABN69819.1"/>
    <property type="molecule type" value="Genomic_DNA"/>
</dbReference>
<dbReference type="RefSeq" id="WP_011839010.1">
    <property type="nucleotide sequence ID" value="NC_009033.1"/>
</dbReference>
<dbReference type="SMR" id="A3DMF9"/>
<dbReference type="STRING" id="399550.Smar_0716"/>
<dbReference type="GeneID" id="4908046"/>
<dbReference type="KEGG" id="smr:Smar_0716"/>
<dbReference type="eggNOG" id="arCOG01988">
    <property type="taxonomic scope" value="Archaea"/>
</dbReference>
<dbReference type="HOGENOM" id="CLU_165896_1_0_2"/>
<dbReference type="OrthoDB" id="84643at2157"/>
<dbReference type="Proteomes" id="UP000000254">
    <property type="component" value="Chromosome"/>
</dbReference>
<dbReference type="GO" id="GO:0003746">
    <property type="term" value="F:translation elongation factor activity"/>
    <property type="evidence" value="ECO:0007669"/>
    <property type="project" value="UniProtKB-UniRule"/>
</dbReference>
<dbReference type="CDD" id="cd00292">
    <property type="entry name" value="EF1B"/>
    <property type="match status" value="1"/>
</dbReference>
<dbReference type="Gene3D" id="3.30.70.60">
    <property type="match status" value="1"/>
</dbReference>
<dbReference type="HAMAP" id="MF_00043">
    <property type="entry name" value="EF1_beta"/>
    <property type="match status" value="1"/>
</dbReference>
<dbReference type="InterPro" id="IPR036219">
    <property type="entry name" value="eEF-1beta-like_sf"/>
</dbReference>
<dbReference type="InterPro" id="IPR014038">
    <property type="entry name" value="EF1B_bsu/dsu_GNE"/>
</dbReference>
<dbReference type="InterPro" id="IPR014717">
    <property type="entry name" value="Transl_elong_EF1B/ribsomal_bS6"/>
</dbReference>
<dbReference type="InterPro" id="IPR004542">
    <property type="entry name" value="Transl_elong_EF1B_B_arc"/>
</dbReference>
<dbReference type="NCBIfam" id="TIGR00489">
    <property type="entry name" value="aEF-1_beta"/>
    <property type="match status" value="1"/>
</dbReference>
<dbReference type="NCBIfam" id="NF001670">
    <property type="entry name" value="PRK00435.1"/>
    <property type="match status" value="1"/>
</dbReference>
<dbReference type="PANTHER" id="PTHR39647">
    <property type="entry name" value="ELONGATION FACTOR 1-BETA"/>
    <property type="match status" value="1"/>
</dbReference>
<dbReference type="PANTHER" id="PTHR39647:SF1">
    <property type="entry name" value="ELONGATION FACTOR 1-BETA"/>
    <property type="match status" value="1"/>
</dbReference>
<dbReference type="Pfam" id="PF00736">
    <property type="entry name" value="EF1_GNE"/>
    <property type="match status" value="1"/>
</dbReference>
<dbReference type="PIRSF" id="PIRSF006521">
    <property type="entry name" value="Transl_elong_EF1B_B_arc"/>
    <property type="match status" value="1"/>
</dbReference>
<dbReference type="SMART" id="SM00888">
    <property type="entry name" value="EF1_GNE"/>
    <property type="match status" value="1"/>
</dbReference>
<dbReference type="SUPFAM" id="SSF54984">
    <property type="entry name" value="eEF-1beta-like"/>
    <property type="match status" value="1"/>
</dbReference>
<protein>
    <recommendedName>
        <fullName evidence="1">Elongation factor 1-beta</fullName>
        <shortName evidence="1">EF-1-beta</shortName>
    </recommendedName>
    <alternativeName>
        <fullName evidence="1">aEF-1beta</fullName>
    </alternativeName>
</protein>
<feature type="chain" id="PRO_1000006623" description="Elongation factor 1-beta">
    <location>
        <begin position="1"/>
        <end position="90"/>
    </location>
</feature>
<accession>A3DMF9</accession>
<proteinExistence type="inferred from homology"/>
<name>EF1B_STAMF</name>
<keyword id="KW-0251">Elongation factor</keyword>
<keyword id="KW-0648">Protein biosynthesis</keyword>
<keyword id="KW-1185">Reference proteome</keyword>
<organism>
    <name type="scientific">Staphylothermus marinus (strain ATCC 43588 / DSM 3639 / JCM 9404 / F1)</name>
    <dbReference type="NCBI Taxonomy" id="399550"/>
    <lineage>
        <taxon>Archaea</taxon>
        <taxon>Thermoproteota</taxon>
        <taxon>Thermoprotei</taxon>
        <taxon>Desulfurococcales</taxon>
        <taxon>Desulfurococcaceae</taxon>
        <taxon>Staphylothermus</taxon>
    </lineage>
</organism>
<reference key="1">
    <citation type="journal article" date="2009" name="BMC Genomics">
        <title>The complete genome sequence of Staphylothermus marinus reveals differences in sulfur metabolism among heterotrophic Crenarchaeota.</title>
        <authorList>
            <person name="Anderson I.J."/>
            <person name="Dharmarajan L."/>
            <person name="Rodriguez J."/>
            <person name="Hooper S."/>
            <person name="Porat I."/>
            <person name="Ulrich L.E."/>
            <person name="Elkins J.G."/>
            <person name="Mavromatis K."/>
            <person name="Sun H."/>
            <person name="Land M."/>
            <person name="Lapidus A."/>
            <person name="Lucas S."/>
            <person name="Barry K."/>
            <person name="Huber H."/>
            <person name="Zhulin I.B."/>
            <person name="Whitman W.B."/>
            <person name="Mukhopadhyay B."/>
            <person name="Woese C."/>
            <person name="Bristow J."/>
            <person name="Kyrpides N."/>
        </authorList>
    </citation>
    <scope>NUCLEOTIDE SEQUENCE [LARGE SCALE GENOMIC DNA]</scope>
    <source>
        <strain>ATCC 43588 / DSM 3639 / JCM 9404 / F1</strain>
    </source>
</reference>
<reference key="2">
    <citation type="journal article" date="2009" name="Stand. Genomic Sci.">
        <title>Complete genome sequence of Staphylothermus marinus Stetter and Fiala 1986 type strain F1.</title>
        <authorList>
            <person name="Anderson I.J."/>
            <person name="Sun H."/>
            <person name="Lapidus A."/>
            <person name="Copeland A."/>
            <person name="Glavina Del Rio T."/>
            <person name="Tice H."/>
            <person name="Dalin E."/>
            <person name="Lucas S."/>
            <person name="Barry K."/>
            <person name="Land M."/>
            <person name="Richardson P."/>
            <person name="Huber H."/>
            <person name="Kyrpides N.C."/>
        </authorList>
    </citation>
    <scope>NUCLEOTIDE SEQUENCE [LARGE SCALE GENOMIC DNA]</scope>
    <source>
        <strain>ATCC 43588 / DSM 3639 / JCM 9404 / F1</strain>
    </source>
</reference>
<evidence type="ECO:0000255" key="1">
    <source>
        <dbReference type="HAMAP-Rule" id="MF_00043"/>
    </source>
</evidence>
<comment type="function">
    <text evidence="1">Promotes the exchange of GDP for GTP in EF-1-alpha/GDP, thus allowing the regeneration of EF-1-alpha/GTP that could then be used to form the ternary complex EF-1-alpha/GTP/AAtRNA.</text>
</comment>
<comment type="similarity">
    <text evidence="1">Belongs to the EF-1-beta/EF-1-delta family.</text>
</comment>